<protein>
    <recommendedName>
        <fullName>Forkhead box protein J1-A</fullName>
        <shortName>FoxJ1-A</shortName>
        <shortName>FoxJ1a</shortName>
        <shortName>xFoxJ1</shortName>
    </recommendedName>
    <alternativeName>
        <fullName>Forkhead protein 5</fullName>
        <shortName>xFKH5</shortName>
    </alternativeName>
</protein>
<organism>
    <name type="scientific">Xenopus laevis</name>
    <name type="common">African clawed frog</name>
    <dbReference type="NCBI Taxonomy" id="8355"/>
    <lineage>
        <taxon>Eukaryota</taxon>
        <taxon>Metazoa</taxon>
        <taxon>Chordata</taxon>
        <taxon>Craniata</taxon>
        <taxon>Vertebrata</taxon>
        <taxon>Euteleostomi</taxon>
        <taxon>Amphibia</taxon>
        <taxon>Batrachia</taxon>
        <taxon>Anura</taxon>
        <taxon>Pipoidea</taxon>
        <taxon>Pipidae</taxon>
        <taxon>Xenopodinae</taxon>
        <taxon>Xenopus</taxon>
        <taxon>Xenopus</taxon>
    </lineage>
</organism>
<proteinExistence type="evidence at transcript level"/>
<keyword id="KW-0010">Activator</keyword>
<keyword id="KW-0970">Cilium biogenesis/degradation</keyword>
<keyword id="KW-0238">DNA-binding</keyword>
<keyword id="KW-0539">Nucleus</keyword>
<keyword id="KW-1185">Reference proteome</keyword>
<keyword id="KW-0804">Transcription</keyword>
<keyword id="KW-0805">Transcription regulation</keyword>
<reference evidence="8 10" key="1">
    <citation type="journal article" date="2004" name="Dev. Genes Evol.">
        <title>Isolation and developmental expression of Xenopus FoxJ1 and FoxK1.</title>
        <authorList>
            <person name="Pohl B.S."/>
            <person name="Knoechel W."/>
        </authorList>
    </citation>
    <scope>NUCLEOTIDE SEQUENCE [MRNA]</scope>
    <scope>TISSUE SPECIFICITY</scope>
    <scope>DEVELOPMENTAL STAGE</scope>
    <source>
        <tissue evidence="4">Tadpole</tissue>
    </source>
</reference>
<reference evidence="9" key="2">
    <citation type="submission" date="2004-07" db="EMBL/GenBank/DDBJ databases">
        <authorList>
            <consortium name="NIH - Xenopus Gene Collection (XGC) project"/>
        </authorList>
    </citation>
    <scope>NUCLEOTIDE SEQUENCE [LARGE SCALE MRNA]</scope>
    <source>
        <tissue evidence="9">Embryo</tissue>
    </source>
</reference>
<reference evidence="8" key="3">
    <citation type="journal article" date="1995" name="Dev. Genet.">
        <title>Differential expression of fork head genes during early Xenopus and zebrafish development.</title>
        <authorList>
            <person name="Dirksen M.-L."/>
            <person name="Jamrich M."/>
        </authorList>
    </citation>
    <scope>NUCLEOTIDE SEQUENCE [MRNA] OF 124-185</scope>
    <scope>TISSUE SPECIFICITY</scope>
    <source>
        <tissue evidence="7">Embryo</tissue>
    </source>
</reference>
<reference evidence="8" key="4">
    <citation type="journal article" date="2005" name="Gene">
        <title>Of fox and frogs: fox (fork head/winged helix) transcription factors in Xenopus development.</title>
        <authorList>
            <person name="Pohl B.S."/>
            <person name="Knoechel W."/>
        </authorList>
    </citation>
    <scope>REVIEW</scope>
</reference>
<reference key="5">
    <citation type="journal article" date="2008" name="Nat. Genet.">
        <title>The forkhead protein Foxj1 specifies node-like cilia in Xenopus and zebrafish embryos.</title>
        <authorList>
            <person name="Stubbs J.L."/>
            <person name="Oishi I."/>
            <person name="Izpisua Belmonte J.C."/>
            <person name="Kintner C."/>
        </authorList>
    </citation>
    <scope>FUNCTION</scope>
</reference>
<comment type="function">
    <text evidence="5 6">Key transcription factor required for motile ciliogenesis. Activates genes essential for motile cilia formation and function. Required for ciliogenesis in multiciliated cells.</text>
</comment>
<comment type="subcellular location">
    <subcellularLocation>
        <location evidence="1 8">Nucleus</location>
    </subcellularLocation>
</comment>
<comment type="tissue specificity">
    <text evidence="4 7">Expressed in two independent areas of stage 10-11 embryos; in the dorsal blastopore lip (Spemann organizer) and shortly after in the ectodermal cells of the animal cap. As development proceeds, cells of the animal cap contribute to the epidermis and show a spotty pattern, which suggests expression in ciliated epidermal cells. Distribution of these cells is uniform in the trunk area of the embryo but more random in the head, being practically absent in the cement gland and olfactory placode. The spotted pattern becomes more dispersed as embryos grow in size. Due to cell movements during gastrulation, expression in the dorsal lip becomes located in the dorsal midline with expression restricted to the neuroectoderm. Expressed transiently in cells of the newly formed neural floor plate in the tail of older tadpoles.</text>
</comment>
<comment type="developmental stage">
    <text evidence="4">Expression begins during gastrulation, increases continuously until stage 26 and then becomes slightly down-regulated during the following stages.</text>
</comment>
<comment type="similarity">
    <text evidence="8">Belongs to the FOXJ1 family.</text>
</comment>
<comment type="sequence caution" evidence="8">
    <conflict type="erroneous initiation">
        <sequence resource="EMBL-CDS" id="AAH77846"/>
    </conflict>
</comment>
<evidence type="ECO:0000255" key="1"/>
<evidence type="ECO:0000255" key="2">
    <source>
        <dbReference type="PROSITE-ProRule" id="PRU00089"/>
    </source>
</evidence>
<evidence type="ECO:0000256" key="3">
    <source>
        <dbReference type="SAM" id="MobiDB-lite"/>
    </source>
</evidence>
<evidence type="ECO:0000269" key="4">
    <source>
    </source>
</evidence>
<evidence type="ECO:0000269" key="5">
    <source>
    </source>
</evidence>
<evidence type="ECO:0000269" key="6">
    <source>
    </source>
</evidence>
<evidence type="ECO:0000269" key="7">
    <source>
    </source>
</evidence>
<evidence type="ECO:0000305" key="8"/>
<evidence type="ECO:0000312" key="9">
    <source>
        <dbReference type="EMBL" id="AAH77846.1"/>
    </source>
</evidence>
<evidence type="ECO:0000312" key="10">
    <source>
        <dbReference type="EMBL" id="CAE76650.1"/>
    </source>
</evidence>
<sequence length="439" mass="49195">MFDLPRAAPLDMADSWLTFQAEEEQGQESFSSSVNLDDSLTSLQWLQEFSILNSNEGKTPSSSGDSHGYRQLSGAPCSPLAADPACLGMPHTPGKPISSSTSRASHLGLQPMEEIDYKTNPHVKPPYSYATLICMAMQASKKTKITLSAIYNWITDNFCYFRHADPTWQNSIRHNLSLNKCFMKVPREKDEPGKGGFWKIDPQYADRLINGAMKKRRLPPVQIHPAFASAQAAASSDSKRGSAWQMSVNSESHQLLKAFEEITNEQGWNPLGEHGWNSISDGKSHKRKQPLPKRMFKAPRLSSSPMLSQEEQTELGSLKGDFDWEVIFDSSINGFNFSAFEDLEVTPPLSPVTRSVDLTVHGKHIDCPQQWYPMGQDHAVAQNSLDFDETLLATSFLQHPWEENRNDYLSNSANIEQLFDLNEAFPAELNDWSSLGSYI</sequence>
<dbReference type="EMBL" id="AJ609390">
    <property type="protein sequence ID" value="CAE76650.1"/>
    <property type="molecule type" value="mRNA"/>
</dbReference>
<dbReference type="EMBL" id="BC077846">
    <property type="protein sequence ID" value="AAH77846.1"/>
    <property type="status" value="ALT_INIT"/>
    <property type="molecule type" value="mRNA"/>
</dbReference>
<dbReference type="RefSeq" id="NP_001083646.1">
    <property type="nucleotide sequence ID" value="NM_001090177.1"/>
</dbReference>
<dbReference type="SMR" id="Q708W2"/>
<dbReference type="GeneID" id="399039"/>
<dbReference type="KEGG" id="xla:399039"/>
<dbReference type="AGR" id="Xenbase:XB-GENE-6254646"/>
<dbReference type="CTD" id="399039"/>
<dbReference type="Xenbase" id="XB-GENE-6254646">
    <property type="gene designation" value="foxj1.S"/>
</dbReference>
<dbReference type="OMA" id="FLENPWD"/>
<dbReference type="OrthoDB" id="5954824at2759"/>
<dbReference type="Proteomes" id="UP000186698">
    <property type="component" value="Chromosome 9_10S"/>
</dbReference>
<dbReference type="Bgee" id="399039">
    <property type="expression patterns" value="Expressed in neurula embryo and 7 other cell types or tissues"/>
</dbReference>
<dbReference type="GO" id="GO:0005634">
    <property type="term" value="C:nucleus"/>
    <property type="evidence" value="ECO:0000250"/>
    <property type="project" value="UniProtKB"/>
</dbReference>
<dbReference type="GO" id="GO:0003677">
    <property type="term" value="F:DNA binding"/>
    <property type="evidence" value="ECO:0000303"/>
    <property type="project" value="UniProtKB"/>
</dbReference>
<dbReference type="GO" id="GO:0003700">
    <property type="term" value="F:DNA-binding transcription factor activity"/>
    <property type="evidence" value="ECO:0000303"/>
    <property type="project" value="UniProtKB"/>
</dbReference>
<dbReference type="GO" id="GO:0000981">
    <property type="term" value="F:DNA-binding transcription factor activity, RNA polymerase II-specific"/>
    <property type="evidence" value="ECO:0000318"/>
    <property type="project" value="GO_Central"/>
</dbReference>
<dbReference type="GO" id="GO:0000978">
    <property type="term" value="F:RNA polymerase II cis-regulatory region sequence-specific DNA binding"/>
    <property type="evidence" value="ECO:0000318"/>
    <property type="project" value="GO_Central"/>
</dbReference>
<dbReference type="GO" id="GO:0060271">
    <property type="term" value="P:cilium assembly"/>
    <property type="evidence" value="ECO:0000250"/>
    <property type="project" value="UniProtKB"/>
</dbReference>
<dbReference type="GO" id="GO:0006355">
    <property type="term" value="P:regulation of DNA-templated transcription"/>
    <property type="evidence" value="ECO:0000303"/>
    <property type="project" value="UniProtKB"/>
</dbReference>
<dbReference type="GO" id="GO:0006357">
    <property type="term" value="P:regulation of transcription by RNA polymerase II"/>
    <property type="evidence" value="ECO:0000318"/>
    <property type="project" value="GO_Central"/>
</dbReference>
<dbReference type="CDD" id="cd20023">
    <property type="entry name" value="FH_FOXJ1"/>
    <property type="match status" value="1"/>
</dbReference>
<dbReference type="FunFam" id="1.10.10.10:FF:000030">
    <property type="entry name" value="Forkhead box protein K2"/>
    <property type="match status" value="1"/>
</dbReference>
<dbReference type="Gene3D" id="1.10.10.10">
    <property type="entry name" value="Winged helix-like DNA-binding domain superfamily/Winged helix DNA-binding domain"/>
    <property type="match status" value="1"/>
</dbReference>
<dbReference type="InterPro" id="IPR047512">
    <property type="entry name" value="FH_FOXJ1"/>
</dbReference>
<dbReference type="InterPro" id="IPR001766">
    <property type="entry name" value="Fork_head_dom"/>
</dbReference>
<dbReference type="InterPro" id="IPR047513">
    <property type="entry name" value="FOXJ1"/>
</dbReference>
<dbReference type="InterPro" id="IPR018122">
    <property type="entry name" value="TF_fork_head_CS_1"/>
</dbReference>
<dbReference type="InterPro" id="IPR030456">
    <property type="entry name" value="TF_fork_head_CS_2"/>
</dbReference>
<dbReference type="InterPro" id="IPR036388">
    <property type="entry name" value="WH-like_DNA-bd_sf"/>
</dbReference>
<dbReference type="InterPro" id="IPR036390">
    <property type="entry name" value="WH_DNA-bd_sf"/>
</dbReference>
<dbReference type="PANTHER" id="PTHR46805">
    <property type="entry name" value="FORKHEAD BOX PROTEIN J1"/>
    <property type="match status" value="1"/>
</dbReference>
<dbReference type="PANTHER" id="PTHR46805:SF5">
    <property type="entry name" value="FORKHEAD BOX PROTEIN J1"/>
    <property type="match status" value="1"/>
</dbReference>
<dbReference type="Pfam" id="PF00250">
    <property type="entry name" value="Forkhead"/>
    <property type="match status" value="1"/>
</dbReference>
<dbReference type="PRINTS" id="PR00053">
    <property type="entry name" value="FORKHEAD"/>
</dbReference>
<dbReference type="SMART" id="SM00339">
    <property type="entry name" value="FH"/>
    <property type="match status" value="1"/>
</dbReference>
<dbReference type="SUPFAM" id="SSF46785">
    <property type="entry name" value="Winged helix' DNA-binding domain"/>
    <property type="match status" value="1"/>
</dbReference>
<dbReference type="PROSITE" id="PS00657">
    <property type="entry name" value="FORK_HEAD_1"/>
    <property type="match status" value="1"/>
</dbReference>
<dbReference type="PROSITE" id="PS00658">
    <property type="entry name" value="FORK_HEAD_2"/>
    <property type="match status" value="1"/>
</dbReference>
<dbReference type="PROSITE" id="PS50039">
    <property type="entry name" value="FORK_HEAD_3"/>
    <property type="match status" value="1"/>
</dbReference>
<feature type="chain" id="PRO_0000250442" description="Forkhead box protein J1-A">
    <location>
        <begin position="1"/>
        <end position="439"/>
    </location>
</feature>
<feature type="DNA-binding region" description="Fork-head" evidence="1 2">
    <location>
        <begin position="124"/>
        <end position="218"/>
    </location>
</feature>
<feature type="region of interest" description="Disordered" evidence="3">
    <location>
        <begin position="273"/>
        <end position="293"/>
    </location>
</feature>
<feature type="compositionally biased region" description="Basic residues" evidence="3">
    <location>
        <begin position="284"/>
        <end position="293"/>
    </location>
</feature>
<accession>Q708W2</accession>
<accession>Q6DCY6</accession>
<accession>Q9PS84</accession>
<name>FXJ1A_XENLA</name>
<gene>
    <name type="primary">foxj1-a</name>
</gene>